<dbReference type="EC" id="2.8.1.8" evidence="1"/>
<dbReference type="EMBL" id="CP000390">
    <property type="protein sequence ID" value="ABG63019.1"/>
    <property type="molecule type" value="Genomic_DNA"/>
</dbReference>
<dbReference type="SMR" id="Q11HV6"/>
<dbReference type="STRING" id="266779.Meso_1624"/>
<dbReference type="KEGG" id="mes:Meso_1624"/>
<dbReference type="eggNOG" id="COG0320">
    <property type="taxonomic scope" value="Bacteria"/>
</dbReference>
<dbReference type="HOGENOM" id="CLU_033144_2_1_5"/>
<dbReference type="OrthoDB" id="9787898at2"/>
<dbReference type="UniPathway" id="UPA00538">
    <property type="reaction ID" value="UER00593"/>
</dbReference>
<dbReference type="GO" id="GO:0005737">
    <property type="term" value="C:cytoplasm"/>
    <property type="evidence" value="ECO:0007669"/>
    <property type="project" value="UniProtKB-SubCell"/>
</dbReference>
<dbReference type="GO" id="GO:0051539">
    <property type="term" value="F:4 iron, 4 sulfur cluster binding"/>
    <property type="evidence" value="ECO:0007669"/>
    <property type="project" value="UniProtKB-UniRule"/>
</dbReference>
<dbReference type="GO" id="GO:0016992">
    <property type="term" value="F:lipoate synthase activity"/>
    <property type="evidence" value="ECO:0007669"/>
    <property type="project" value="UniProtKB-UniRule"/>
</dbReference>
<dbReference type="GO" id="GO:0046872">
    <property type="term" value="F:metal ion binding"/>
    <property type="evidence" value="ECO:0007669"/>
    <property type="project" value="UniProtKB-KW"/>
</dbReference>
<dbReference type="CDD" id="cd01335">
    <property type="entry name" value="Radical_SAM"/>
    <property type="match status" value="1"/>
</dbReference>
<dbReference type="FunFam" id="3.20.20.70:FF:000186">
    <property type="entry name" value="Lipoyl synthase"/>
    <property type="match status" value="1"/>
</dbReference>
<dbReference type="Gene3D" id="3.20.20.70">
    <property type="entry name" value="Aldolase class I"/>
    <property type="match status" value="1"/>
</dbReference>
<dbReference type="HAMAP" id="MF_00206">
    <property type="entry name" value="Lipoyl_synth"/>
    <property type="match status" value="1"/>
</dbReference>
<dbReference type="InterPro" id="IPR013785">
    <property type="entry name" value="Aldolase_TIM"/>
</dbReference>
<dbReference type="InterPro" id="IPR006638">
    <property type="entry name" value="Elp3/MiaA/NifB-like_rSAM"/>
</dbReference>
<dbReference type="InterPro" id="IPR003698">
    <property type="entry name" value="Lipoyl_synth"/>
</dbReference>
<dbReference type="InterPro" id="IPR007197">
    <property type="entry name" value="rSAM"/>
</dbReference>
<dbReference type="NCBIfam" id="TIGR00510">
    <property type="entry name" value="lipA"/>
    <property type="match status" value="1"/>
</dbReference>
<dbReference type="NCBIfam" id="NF004019">
    <property type="entry name" value="PRK05481.1"/>
    <property type="match status" value="1"/>
</dbReference>
<dbReference type="NCBIfam" id="NF009544">
    <property type="entry name" value="PRK12928.1"/>
    <property type="match status" value="1"/>
</dbReference>
<dbReference type="PANTHER" id="PTHR10949">
    <property type="entry name" value="LIPOYL SYNTHASE"/>
    <property type="match status" value="1"/>
</dbReference>
<dbReference type="PANTHER" id="PTHR10949:SF0">
    <property type="entry name" value="LIPOYL SYNTHASE, MITOCHONDRIAL"/>
    <property type="match status" value="1"/>
</dbReference>
<dbReference type="Pfam" id="PF04055">
    <property type="entry name" value="Radical_SAM"/>
    <property type="match status" value="1"/>
</dbReference>
<dbReference type="PIRSF" id="PIRSF005963">
    <property type="entry name" value="Lipoyl_synth"/>
    <property type="match status" value="1"/>
</dbReference>
<dbReference type="SFLD" id="SFLDF00271">
    <property type="entry name" value="lipoyl_synthase"/>
    <property type="match status" value="1"/>
</dbReference>
<dbReference type="SFLD" id="SFLDG01058">
    <property type="entry name" value="lipoyl_synthase_like"/>
    <property type="match status" value="1"/>
</dbReference>
<dbReference type="SMART" id="SM00729">
    <property type="entry name" value="Elp3"/>
    <property type="match status" value="1"/>
</dbReference>
<dbReference type="SUPFAM" id="SSF102114">
    <property type="entry name" value="Radical SAM enzymes"/>
    <property type="match status" value="1"/>
</dbReference>
<dbReference type="PROSITE" id="PS51918">
    <property type="entry name" value="RADICAL_SAM"/>
    <property type="match status" value="1"/>
</dbReference>
<feature type="chain" id="PRO_1000012232" description="Lipoyl synthase">
    <location>
        <begin position="1"/>
        <end position="322"/>
    </location>
</feature>
<feature type="domain" description="Radical SAM core" evidence="2">
    <location>
        <begin position="71"/>
        <end position="287"/>
    </location>
</feature>
<feature type="region of interest" description="Disordered" evidence="3">
    <location>
        <begin position="1"/>
        <end position="24"/>
    </location>
</feature>
<feature type="compositionally biased region" description="Basic and acidic residues" evidence="3">
    <location>
        <begin position="14"/>
        <end position="24"/>
    </location>
</feature>
<feature type="binding site" evidence="1">
    <location>
        <position position="59"/>
    </location>
    <ligand>
        <name>[4Fe-4S] cluster</name>
        <dbReference type="ChEBI" id="CHEBI:49883"/>
        <label>1</label>
    </ligand>
</feature>
<feature type="binding site" evidence="1">
    <location>
        <position position="64"/>
    </location>
    <ligand>
        <name>[4Fe-4S] cluster</name>
        <dbReference type="ChEBI" id="CHEBI:49883"/>
        <label>1</label>
    </ligand>
</feature>
<feature type="binding site" evidence="1">
    <location>
        <position position="70"/>
    </location>
    <ligand>
        <name>[4Fe-4S] cluster</name>
        <dbReference type="ChEBI" id="CHEBI:49883"/>
        <label>1</label>
    </ligand>
</feature>
<feature type="binding site" evidence="1">
    <location>
        <position position="85"/>
    </location>
    <ligand>
        <name>[4Fe-4S] cluster</name>
        <dbReference type="ChEBI" id="CHEBI:49883"/>
        <label>2</label>
        <note>4Fe-4S-S-AdoMet</note>
    </ligand>
</feature>
<feature type="binding site" evidence="1">
    <location>
        <position position="89"/>
    </location>
    <ligand>
        <name>[4Fe-4S] cluster</name>
        <dbReference type="ChEBI" id="CHEBI:49883"/>
        <label>2</label>
        <note>4Fe-4S-S-AdoMet</note>
    </ligand>
</feature>
<feature type="binding site" evidence="1">
    <location>
        <position position="92"/>
    </location>
    <ligand>
        <name>[4Fe-4S] cluster</name>
        <dbReference type="ChEBI" id="CHEBI:49883"/>
        <label>2</label>
        <note>4Fe-4S-S-AdoMet</note>
    </ligand>
</feature>
<feature type="binding site" evidence="1">
    <location>
        <position position="298"/>
    </location>
    <ligand>
        <name>[4Fe-4S] cluster</name>
        <dbReference type="ChEBI" id="CHEBI:49883"/>
        <label>1</label>
    </ligand>
</feature>
<sequence length="322" mass="35963">MVTVLDTVSKPRPRHPEKAHRPDQEVLRKPDWIRVKAPTSRGYLETREIVKTNKLVTVCEEAGCPNIGECWDKKHATFMIMGEICTRACAFCNVATGIPGPLDPNEPANVAKAVREMGLNHVVITSVDRDDLNDGGAQHFADVIQAIRAATPQTTIEILTPDFLRKDGALELVVAAKPDVFNHNLETVPSKYLTVRPGARYFHSIRLLQRVKEIDPSIFTKSGIMVGLGEERNEVLQLMDDLRSADVDFITIGQYLQPTKKHHPVKKFVTPEEFKSYETIAYTKGFLMASSSPLTRSSHHAGEDFERLRAAREARLSLAKTA</sequence>
<keyword id="KW-0004">4Fe-4S</keyword>
<keyword id="KW-0963">Cytoplasm</keyword>
<keyword id="KW-0408">Iron</keyword>
<keyword id="KW-0411">Iron-sulfur</keyword>
<keyword id="KW-0479">Metal-binding</keyword>
<keyword id="KW-0949">S-adenosyl-L-methionine</keyword>
<keyword id="KW-0808">Transferase</keyword>
<evidence type="ECO:0000255" key="1">
    <source>
        <dbReference type="HAMAP-Rule" id="MF_00206"/>
    </source>
</evidence>
<evidence type="ECO:0000255" key="2">
    <source>
        <dbReference type="PROSITE-ProRule" id="PRU01266"/>
    </source>
</evidence>
<evidence type="ECO:0000256" key="3">
    <source>
        <dbReference type="SAM" id="MobiDB-lite"/>
    </source>
</evidence>
<accession>Q11HV6</accession>
<proteinExistence type="inferred from homology"/>
<name>LIPA_CHESB</name>
<reference key="1">
    <citation type="submission" date="2006-06" db="EMBL/GenBank/DDBJ databases">
        <title>Complete sequence of chromosome of Mesorhizobium sp. BNC1.</title>
        <authorList>
            <consortium name="US DOE Joint Genome Institute"/>
            <person name="Copeland A."/>
            <person name="Lucas S."/>
            <person name="Lapidus A."/>
            <person name="Barry K."/>
            <person name="Detter J.C."/>
            <person name="Glavina del Rio T."/>
            <person name="Hammon N."/>
            <person name="Israni S."/>
            <person name="Dalin E."/>
            <person name="Tice H."/>
            <person name="Pitluck S."/>
            <person name="Chertkov O."/>
            <person name="Brettin T."/>
            <person name="Bruce D."/>
            <person name="Han C."/>
            <person name="Tapia R."/>
            <person name="Gilna P."/>
            <person name="Schmutz J."/>
            <person name="Larimer F."/>
            <person name="Land M."/>
            <person name="Hauser L."/>
            <person name="Kyrpides N."/>
            <person name="Mikhailova N."/>
            <person name="Richardson P."/>
        </authorList>
    </citation>
    <scope>NUCLEOTIDE SEQUENCE [LARGE SCALE GENOMIC DNA]</scope>
    <source>
        <strain>BNC1</strain>
    </source>
</reference>
<protein>
    <recommendedName>
        <fullName evidence="1">Lipoyl synthase</fullName>
        <ecNumber evidence="1">2.8.1.8</ecNumber>
    </recommendedName>
    <alternativeName>
        <fullName evidence="1">Lip-syn</fullName>
        <shortName evidence="1">LS</shortName>
    </alternativeName>
    <alternativeName>
        <fullName evidence="1">Lipoate synthase</fullName>
    </alternativeName>
    <alternativeName>
        <fullName evidence="1">Lipoic acid synthase</fullName>
    </alternativeName>
    <alternativeName>
        <fullName evidence="1">Sulfur insertion protein LipA</fullName>
    </alternativeName>
</protein>
<organism>
    <name type="scientific">Chelativorans sp. (strain BNC1)</name>
    <dbReference type="NCBI Taxonomy" id="266779"/>
    <lineage>
        <taxon>Bacteria</taxon>
        <taxon>Pseudomonadati</taxon>
        <taxon>Pseudomonadota</taxon>
        <taxon>Alphaproteobacteria</taxon>
        <taxon>Hyphomicrobiales</taxon>
        <taxon>Phyllobacteriaceae</taxon>
        <taxon>Chelativorans</taxon>
    </lineage>
</organism>
<gene>
    <name evidence="1" type="primary">lipA</name>
    <name type="ordered locus">Meso_1624</name>
</gene>
<comment type="function">
    <text evidence="1">Catalyzes the radical-mediated insertion of two sulfur atoms into the C-6 and C-8 positions of the octanoyl moiety bound to the lipoyl domains of lipoate-dependent enzymes, thereby converting the octanoylated domains into lipoylated derivatives.</text>
</comment>
<comment type="catalytic activity">
    <reaction evidence="1">
        <text>[[Fe-S] cluster scaffold protein carrying a second [4Fe-4S](2+) cluster] + N(6)-octanoyl-L-lysyl-[protein] + 2 oxidized [2Fe-2S]-[ferredoxin] + 2 S-adenosyl-L-methionine + 4 H(+) = [[Fe-S] cluster scaffold protein] + N(6)-[(R)-dihydrolipoyl]-L-lysyl-[protein] + 4 Fe(3+) + 2 hydrogen sulfide + 2 5'-deoxyadenosine + 2 L-methionine + 2 reduced [2Fe-2S]-[ferredoxin]</text>
        <dbReference type="Rhea" id="RHEA:16585"/>
        <dbReference type="Rhea" id="RHEA-COMP:9928"/>
        <dbReference type="Rhea" id="RHEA-COMP:10000"/>
        <dbReference type="Rhea" id="RHEA-COMP:10001"/>
        <dbReference type="Rhea" id="RHEA-COMP:10475"/>
        <dbReference type="Rhea" id="RHEA-COMP:14568"/>
        <dbReference type="Rhea" id="RHEA-COMP:14569"/>
        <dbReference type="ChEBI" id="CHEBI:15378"/>
        <dbReference type="ChEBI" id="CHEBI:17319"/>
        <dbReference type="ChEBI" id="CHEBI:29034"/>
        <dbReference type="ChEBI" id="CHEBI:29919"/>
        <dbReference type="ChEBI" id="CHEBI:33722"/>
        <dbReference type="ChEBI" id="CHEBI:33737"/>
        <dbReference type="ChEBI" id="CHEBI:33738"/>
        <dbReference type="ChEBI" id="CHEBI:57844"/>
        <dbReference type="ChEBI" id="CHEBI:59789"/>
        <dbReference type="ChEBI" id="CHEBI:78809"/>
        <dbReference type="ChEBI" id="CHEBI:83100"/>
        <dbReference type="EC" id="2.8.1.8"/>
    </reaction>
</comment>
<comment type="cofactor">
    <cofactor evidence="1">
        <name>[4Fe-4S] cluster</name>
        <dbReference type="ChEBI" id="CHEBI:49883"/>
    </cofactor>
    <text evidence="1">Binds 2 [4Fe-4S] clusters per subunit. One cluster is coordinated with 3 cysteines and an exchangeable S-adenosyl-L-methionine.</text>
</comment>
<comment type="pathway">
    <text evidence="1">Protein modification; protein lipoylation via endogenous pathway; protein N(6)-(lipoyl)lysine from octanoyl-[acyl-carrier-protein]: step 2/2.</text>
</comment>
<comment type="subcellular location">
    <subcellularLocation>
        <location evidence="1">Cytoplasm</location>
    </subcellularLocation>
</comment>
<comment type="similarity">
    <text evidence="1">Belongs to the radical SAM superfamily. Lipoyl synthase family.</text>
</comment>